<dbReference type="EC" id="6.1.1.9" evidence="1"/>
<dbReference type="EMBL" id="CP000090">
    <property type="protein sequence ID" value="AAZ60242.1"/>
    <property type="molecule type" value="Genomic_DNA"/>
</dbReference>
<dbReference type="SMR" id="Q474E1"/>
<dbReference type="STRING" id="264198.Reut_A0863"/>
<dbReference type="KEGG" id="reu:Reut_A0863"/>
<dbReference type="eggNOG" id="COG0525">
    <property type="taxonomic scope" value="Bacteria"/>
</dbReference>
<dbReference type="HOGENOM" id="CLU_001493_0_2_4"/>
<dbReference type="OrthoDB" id="9810365at2"/>
<dbReference type="GO" id="GO:0005829">
    <property type="term" value="C:cytosol"/>
    <property type="evidence" value="ECO:0007669"/>
    <property type="project" value="TreeGrafter"/>
</dbReference>
<dbReference type="GO" id="GO:0002161">
    <property type="term" value="F:aminoacyl-tRNA deacylase activity"/>
    <property type="evidence" value="ECO:0007669"/>
    <property type="project" value="InterPro"/>
</dbReference>
<dbReference type="GO" id="GO:0005524">
    <property type="term" value="F:ATP binding"/>
    <property type="evidence" value="ECO:0007669"/>
    <property type="project" value="UniProtKB-UniRule"/>
</dbReference>
<dbReference type="GO" id="GO:0004832">
    <property type="term" value="F:valine-tRNA ligase activity"/>
    <property type="evidence" value="ECO:0007669"/>
    <property type="project" value="UniProtKB-UniRule"/>
</dbReference>
<dbReference type="GO" id="GO:0006438">
    <property type="term" value="P:valyl-tRNA aminoacylation"/>
    <property type="evidence" value="ECO:0007669"/>
    <property type="project" value="UniProtKB-UniRule"/>
</dbReference>
<dbReference type="CDD" id="cd07962">
    <property type="entry name" value="Anticodon_Ia_Val"/>
    <property type="match status" value="1"/>
</dbReference>
<dbReference type="CDD" id="cd00817">
    <property type="entry name" value="ValRS_core"/>
    <property type="match status" value="1"/>
</dbReference>
<dbReference type="FunFam" id="1.10.287.380:FF:000001">
    <property type="entry name" value="Valine--tRNA ligase"/>
    <property type="match status" value="1"/>
</dbReference>
<dbReference type="FunFam" id="1.10.730.10:FF:000009">
    <property type="entry name" value="Valine--tRNA ligase, mitochondrial"/>
    <property type="match status" value="1"/>
</dbReference>
<dbReference type="FunFam" id="3.40.50.620:FF:000020">
    <property type="entry name" value="Valine--tRNA ligase, mitochondrial"/>
    <property type="match status" value="1"/>
</dbReference>
<dbReference type="FunFam" id="3.40.50.620:FF:000078">
    <property type="entry name" value="Valine--tRNA ligase, mitochondrial"/>
    <property type="match status" value="1"/>
</dbReference>
<dbReference type="FunFam" id="3.90.740.10:FF:000005">
    <property type="entry name" value="Valine--tRNA ligase, mitochondrial"/>
    <property type="match status" value="1"/>
</dbReference>
<dbReference type="Gene3D" id="3.40.50.620">
    <property type="entry name" value="HUPs"/>
    <property type="match status" value="2"/>
</dbReference>
<dbReference type="Gene3D" id="1.10.730.10">
    <property type="entry name" value="Isoleucyl-tRNA Synthetase, Domain 1"/>
    <property type="match status" value="1"/>
</dbReference>
<dbReference type="Gene3D" id="1.10.287.380">
    <property type="entry name" value="Valyl-tRNA synthetase, C-terminal domain"/>
    <property type="match status" value="1"/>
</dbReference>
<dbReference type="Gene3D" id="3.90.740.10">
    <property type="entry name" value="Valyl/Leucyl/Isoleucyl-tRNA synthetase, editing domain"/>
    <property type="match status" value="2"/>
</dbReference>
<dbReference type="HAMAP" id="MF_02004">
    <property type="entry name" value="Val_tRNA_synth_type1"/>
    <property type="match status" value="1"/>
</dbReference>
<dbReference type="InterPro" id="IPR001412">
    <property type="entry name" value="aa-tRNA-synth_I_CS"/>
</dbReference>
<dbReference type="InterPro" id="IPR002300">
    <property type="entry name" value="aa-tRNA-synth_Ia"/>
</dbReference>
<dbReference type="InterPro" id="IPR033705">
    <property type="entry name" value="Anticodon_Ia_Val"/>
</dbReference>
<dbReference type="InterPro" id="IPR013155">
    <property type="entry name" value="M/V/L/I-tRNA-synth_anticd-bd"/>
</dbReference>
<dbReference type="InterPro" id="IPR014729">
    <property type="entry name" value="Rossmann-like_a/b/a_fold"/>
</dbReference>
<dbReference type="InterPro" id="IPR010978">
    <property type="entry name" value="tRNA-bd_arm"/>
</dbReference>
<dbReference type="InterPro" id="IPR009080">
    <property type="entry name" value="tRNAsynth_Ia_anticodon-bd"/>
</dbReference>
<dbReference type="InterPro" id="IPR037118">
    <property type="entry name" value="Val-tRNA_synth_C_sf"/>
</dbReference>
<dbReference type="InterPro" id="IPR019499">
    <property type="entry name" value="Val-tRNA_synth_tRNA-bd"/>
</dbReference>
<dbReference type="InterPro" id="IPR009008">
    <property type="entry name" value="Val/Leu/Ile-tRNA-synth_edit"/>
</dbReference>
<dbReference type="InterPro" id="IPR002303">
    <property type="entry name" value="Valyl-tRNA_ligase"/>
</dbReference>
<dbReference type="NCBIfam" id="NF004349">
    <property type="entry name" value="PRK05729.1"/>
    <property type="match status" value="1"/>
</dbReference>
<dbReference type="NCBIfam" id="TIGR00422">
    <property type="entry name" value="valS"/>
    <property type="match status" value="1"/>
</dbReference>
<dbReference type="PANTHER" id="PTHR11946:SF93">
    <property type="entry name" value="VALINE--TRNA LIGASE, CHLOROPLASTIC_MITOCHONDRIAL 2"/>
    <property type="match status" value="1"/>
</dbReference>
<dbReference type="PANTHER" id="PTHR11946">
    <property type="entry name" value="VALYL-TRNA SYNTHETASES"/>
    <property type="match status" value="1"/>
</dbReference>
<dbReference type="Pfam" id="PF08264">
    <property type="entry name" value="Anticodon_1"/>
    <property type="match status" value="1"/>
</dbReference>
<dbReference type="Pfam" id="PF00133">
    <property type="entry name" value="tRNA-synt_1"/>
    <property type="match status" value="1"/>
</dbReference>
<dbReference type="Pfam" id="PF10458">
    <property type="entry name" value="Val_tRNA-synt_C"/>
    <property type="match status" value="1"/>
</dbReference>
<dbReference type="PRINTS" id="PR00986">
    <property type="entry name" value="TRNASYNTHVAL"/>
</dbReference>
<dbReference type="SUPFAM" id="SSF47323">
    <property type="entry name" value="Anticodon-binding domain of a subclass of class I aminoacyl-tRNA synthetases"/>
    <property type="match status" value="1"/>
</dbReference>
<dbReference type="SUPFAM" id="SSF52374">
    <property type="entry name" value="Nucleotidylyl transferase"/>
    <property type="match status" value="1"/>
</dbReference>
<dbReference type="SUPFAM" id="SSF46589">
    <property type="entry name" value="tRNA-binding arm"/>
    <property type="match status" value="1"/>
</dbReference>
<dbReference type="SUPFAM" id="SSF50677">
    <property type="entry name" value="ValRS/IleRS/LeuRS editing domain"/>
    <property type="match status" value="1"/>
</dbReference>
<dbReference type="PROSITE" id="PS00178">
    <property type="entry name" value="AA_TRNA_LIGASE_I"/>
    <property type="match status" value="1"/>
</dbReference>
<protein>
    <recommendedName>
        <fullName evidence="1">Valine--tRNA ligase</fullName>
        <ecNumber evidence="1">6.1.1.9</ecNumber>
    </recommendedName>
    <alternativeName>
        <fullName evidence="1">Valyl-tRNA synthetase</fullName>
        <shortName evidence="1">ValRS</shortName>
    </alternativeName>
</protein>
<proteinExistence type="inferred from homology"/>
<feature type="chain" id="PRO_0000224542" description="Valine--tRNA ligase">
    <location>
        <begin position="1"/>
        <end position="955"/>
    </location>
</feature>
<feature type="coiled-coil region" evidence="1">
    <location>
        <begin position="926"/>
        <end position="955"/>
    </location>
</feature>
<feature type="short sequence motif" description="'HIGH' region">
    <location>
        <begin position="49"/>
        <end position="59"/>
    </location>
</feature>
<feature type="short sequence motif" description="'KMSKS' region">
    <location>
        <begin position="549"/>
        <end position="553"/>
    </location>
</feature>
<feature type="binding site" evidence="1">
    <location>
        <position position="552"/>
    </location>
    <ligand>
        <name>ATP</name>
        <dbReference type="ChEBI" id="CHEBI:30616"/>
    </ligand>
</feature>
<organism>
    <name type="scientific">Cupriavidus pinatubonensis (strain JMP 134 / LMG 1197)</name>
    <name type="common">Cupriavidus necator (strain JMP 134)</name>
    <dbReference type="NCBI Taxonomy" id="264198"/>
    <lineage>
        <taxon>Bacteria</taxon>
        <taxon>Pseudomonadati</taxon>
        <taxon>Pseudomonadota</taxon>
        <taxon>Betaproteobacteria</taxon>
        <taxon>Burkholderiales</taxon>
        <taxon>Burkholderiaceae</taxon>
        <taxon>Cupriavidus</taxon>
    </lineage>
</organism>
<evidence type="ECO:0000255" key="1">
    <source>
        <dbReference type="HAMAP-Rule" id="MF_02004"/>
    </source>
</evidence>
<name>SYV_CUPPJ</name>
<comment type="function">
    <text evidence="1">Catalyzes the attachment of valine to tRNA(Val). As ValRS can inadvertently accommodate and process structurally similar amino acids such as threonine, to avoid such errors, it has a 'posttransfer' editing activity that hydrolyzes mischarged Thr-tRNA(Val) in a tRNA-dependent manner.</text>
</comment>
<comment type="catalytic activity">
    <reaction evidence="1">
        <text>tRNA(Val) + L-valine + ATP = L-valyl-tRNA(Val) + AMP + diphosphate</text>
        <dbReference type="Rhea" id="RHEA:10704"/>
        <dbReference type="Rhea" id="RHEA-COMP:9672"/>
        <dbReference type="Rhea" id="RHEA-COMP:9708"/>
        <dbReference type="ChEBI" id="CHEBI:30616"/>
        <dbReference type="ChEBI" id="CHEBI:33019"/>
        <dbReference type="ChEBI" id="CHEBI:57762"/>
        <dbReference type="ChEBI" id="CHEBI:78442"/>
        <dbReference type="ChEBI" id="CHEBI:78537"/>
        <dbReference type="ChEBI" id="CHEBI:456215"/>
        <dbReference type="EC" id="6.1.1.9"/>
    </reaction>
</comment>
<comment type="subunit">
    <text evidence="1">Monomer.</text>
</comment>
<comment type="subcellular location">
    <subcellularLocation>
        <location evidence="1">Cytoplasm</location>
    </subcellularLocation>
</comment>
<comment type="domain">
    <text evidence="1">ValRS has two distinct active sites: one for aminoacylation and one for editing. The misactivated threonine is translocated from the active site to the editing site.</text>
</comment>
<comment type="domain">
    <text evidence="1">The C-terminal coiled-coil domain is crucial for aminoacylation activity.</text>
</comment>
<comment type="similarity">
    <text evidence="1">Belongs to the class-I aminoacyl-tRNA synthetase family. ValS type 1 subfamily.</text>
</comment>
<sequence>MTAQDQSLAKSFEPAAIEAKWGPEWEKRGIAQPTFDPAKPDFAIQLPPPNVTGTLHMGHAFNQTIMDGLTRHARMLGANTLWVPGTDHAGIATQIVVERQLEAQGVSRHDLGREKFTEKVWAWKEESGSTITRQVRRMGASIDWTREYFTMSPDMSKAVTEVFVRLHEQGLIYRGKRLVNWDPVLGTAVSDLEVDSVEEDGFLWHIRYPLVEADAKGGLTHLTVATTRPETMLGDVAVMVHPEDERYAHLIGKEVELPLTGRRIPVIADEYVDREFGTGVVKVTPAHDFNDYAVGQRHNLPQISILTLDAKITADAPGNYAGQDRYDARKAIVADLEAQGLLVETKKHKLMTPRSERTGSAIEPMLTDQWFVAMSKPAPEGTFYPGRSIAEVALDAVQSGEIKLVPENWNSTYNQWLANIQDWCISRQLWWGHQIPAWYDDAGNCFVARTEEEAQAKAKAAGSTGALRREEDVLDTWFSSALVPFSSLGWPEETPELKHFLPSSVLVTGYDIIFFWVARMVMMTKHFTGQVPFHTVYVHGLVRDSEGKKMSKSEGNTLDPVDLIDGIDLDTLLKKRTTGLRRPKDAPKIEKKTKKEFPEGIPAFGADALRFTFASLATLGRNINFDTGRCEGYRNFCNKLWNATRFVLMNTEGHDCGMGPCNNDCGPDGYLHFSQADRWIVSLLQRVEADVEKGFAEYRFDNIASAIYKFVWDEYCDWYLELAKVQIQTGTEAQQRATRRTLLRVLETVLRLAHPIIPFITEELWQKVAPLAGRAKGDGTESLALQAYPLPAMAKIDEAAEQWVAQLKAVVDACRNLRGEMNISPAQRIPLYAQGDTEFLREASAHIQALAKLSEVRVFEDDATLQAEGAGAPVAIVGGNHLLLKIEIDVAAERVRLSKEIERIGGEIGKCRGKLSNESFVAKAPPAVVAQETQRLSDFEQTLAKLQDQLQRLPA</sequence>
<gene>
    <name evidence="1" type="primary">valS</name>
    <name type="ordered locus">Reut_A0863</name>
</gene>
<keyword id="KW-0030">Aminoacyl-tRNA synthetase</keyword>
<keyword id="KW-0067">ATP-binding</keyword>
<keyword id="KW-0175">Coiled coil</keyword>
<keyword id="KW-0963">Cytoplasm</keyword>
<keyword id="KW-0436">Ligase</keyword>
<keyword id="KW-0547">Nucleotide-binding</keyword>
<keyword id="KW-0648">Protein biosynthesis</keyword>
<accession>Q474E1</accession>
<reference key="1">
    <citation type="journal article" date="2010" name="PLoS ONE">
        <title>The complete multipartite genome sequence of Cupriavidus necator JMP134, a versatile pollutant degrader.</title>
        <authorList>
            <person name="Lykidis A."/>
            <person name="Perez-Pantoja D."/>
            <person name="Ledger T."/>
            <person name="Mavromatis K."/>
            <person name="Anderson I.J."/>
            <person name="Ivanova N.N."/>
            <person name="Hooper S.D."/>
            <person name="Lapidus A."/>
            <person name="Lucas S."/>
            <person name="Gonzalez B."/>
            <person name="Kyrpides N.C."/>
        </authorList>
    </citation>
    <scope>NUCLEOTIDE SEQUENCE [LARGE SCALE GENOMIC DNA]</scope>
    <source>
        <strain>JMP134 / LMG 1197</strain>
    </source>
</reference>